<reference key="1">
    <citation type="journal article" date="2005" name="Nucleic Acids Res.">
        <title>The genome sequence of Salmonella enterica serovar Choleraesuis, a highly invasive and resistant zoonotic pathogen.</title>
        <authorList>
            <person name="Chiu C.-H."/>
            <person name="Tang P."/>
            <person name="Chu C."/>
            <person name="Hu S."/>
            <person name="Bao Q."/>
            <person name="Yu J."/>
            <person name="Chou Y.-Y."/>
            <person name="Wang H.-S."/>
            <person name="Lee Y.-S."/>
        </authorList>
    </citation>
    <scope>NUCLEOTIDE SEQUENCE [LARGE SCALE GENOMIC DNA]</scope>
    <source>
        <strain>SC-B67</strain>
    </source>
</reference>
<protein>
    <recommendedName>
        <fullName evidence="1">Phosphoglucosamine mutase</fullName>
        <ecNumber evidence="1">5.4.2.10</ecNumber>
    </recommendedName>
</protein>
<name>GLMM_SALCH</name>
<evidence type="ECO:0000255" key="1">
    <source>
        <dbReference type="HAMAP-Rule" id="MF_01554"/>
    </source>
</evidence>
<gene>
    <name evidence="1" type="primary">glmM</name>
    <name type="ordered locus">SCH_3233</name>
</gene>
<dbReference type="EC" id="5.4.2.10" evidence="1"/>
<dbReference type="EMBL" id="AE017220">
    <property type="protein sequence ID" value="AAX67139.1"/>
    <property type="molecule type" value="Genomic_DNA"/>
</dbReference>
<dbReference type="RefSeq" id="WP_000071172.1">
    <property type="nucleotide sequence ID" value="NC_006905.1"/>
</dbReference>
<dbReference type="SMR" id="Q57JH3"/>
<dbReference type="KEGG" id="sec:SCH_3233"/>
<dbReference type="HOGENOM" id="CLU_016950_7_0_6"/>
<dbReference type="Proteomes" id="UP000000538">
    <property type="component" value="Chromosome"/>
</dbReference>
<dbReference type="GO" id="GO:0005829">
    <property type="term" value="C:cytosol"/>
    <property type="evidence" value="ECO:0007669"/>
    <property type="project" value="TreeGrafter"/>
</dbReference>
<dbReference type="GO" id="GO:0000287">
    <property type="term" value="F:magnesium ion binding"/>
    <property type="evidence" value="ECO:0007669"/>
    <property type="project" value="UniProtKB-UniRule"/>
</dbReference>
<dbReference type="GO" id="GO:0008966">
    <property type="term" value="F:phosphoglucosamine mutase activity"/>
    <property type="evidence" value="ECO:0007669"/>
    <property type="project" value="UniProtKB-UniRule"/>
</dbReference>
<dbReference type="GO" id="GO:0004615">
    <property type="term" value="F:phosphomannomutase activity"/>
    <property type="evidence" value="ECO:0007669"/>
    <property type="project" value="TreeGrafter"/>
</dbReference>
<dbReference type="GO" id="GO:0005975">
    <property type="term" value="P:carbohydrate metabolic process"/>
    <property type="evidence" value="ECO:0007669"/>
    <property type="project" value="InterPro"/>
</dbReference>
<dbReference type="GO" id="GO:0009252">
    <property type="term" value="P:peptidoglycan biosynthetic process"/>
    <property type="evidence" value="ECO:0007669"/>
    <property type="project" value="TreeGrafter"/>
</dbReference>
<dbReference type="GO" id="GO:0006048">
    <property type="term" value="P:UDP-N-acetylglucosamine biosynthetic process"/>
    <property type="evidence" value="ECO:0007669"/>
    <property type="project" value="TreeGrafter"/>
</dbReference>
<dbReference type="CDD" id="cd05802">
    <property type="entry name" value="GlmM"/>
    <property type="match status" value="1"/>
</dbReference>
<dbReference type="FunFam" id="3.30.310.50:FF:000001">
    <property type="entry name" value="Phosphoglucosamine mutase"/>
    <property type="match status" value="1"/>
</dbReference>
<dbReference type="FunFam" id="3.40.120.10:FF:000001">
    <property type="entry name" value="Phosphoglucosamine mutase"/>
    <property type="match status" value="1"/>
</dbReference>
<dbReference type="FunFam" id="3.40.120.10:FF:000002">
    <property type="entry name" value="Phosphoglucosamine mutase"/>
    <property type="match status" value="1"/>
</dbReference>
<dbReference type="Gene3D" id="3.40.120.10">
    <property type="entry name" value="Alpha-D-Glucose-1,6-Bisphosphate, subunit A, domain 3"/>
    <property type="match status" value="3"/>
</dbReference>
<dbReference type="Gene3D" id="3.30.310.50">
    <property type="entry name" value="Alpha-D-phosphohexomutase, C-terminal domain"/>
    <property type="match status" value="1"/>
</dbReference>
<dbReference type="HAMAP" id="MF_01554_B">
    <property type="entry name" value="GlmM_B"/>
    <property type="match status" value="1"/>
</dbReference>
<dbReference type="InterPro" id="IPR005844">
    <property type="entry name" value="A-D-PHexomutase_a/b/a-I"/>
</dbReference>
<dbReference type="InterPro" id="IPR016055">
    <property type="entry name" value="A-D-PHexomutase_a/b/a-I/II/III"/>
</dbReference>
<dbReference type="InterPro" id="IPR005845">
    <property type="entry name" value="A-D-PHexomutase_a/b/a-II"/>
</dbReference>
<dbReference type="InterPro" id="IPR005846">
    <property type="entry name" value="A-D-PHexomutase_a/b/a-III"/>
</dbReference>
<dbReference type="InterPro" id="IPR005843">
    <property type="entry name" value="A-D-PHexomutase_C"/>
</dbReference>
<dbReference type="InterPro" id="IPR036900">
    <property type="entry name" value="A-D-PHexomutase_C_sf"/>
</dbReference>
<dbReference type="InterPro" id="IPR016066">
    <property type="entry name" value="A-D-PHexomutase_CS"/>
</dbReference>
<dbReference type="InterPro" id="IPR005841">
    <property type="entry name" value="Alpha-D-phosphohexomutase_SF"/>
</dbReference>
<dbReference type="InterPro" id="IPR006352">
    <property type="entry name" value="GlmM_bact"/>
</dbReference>
<dbReference type="InterPro" id="IPR050060">
    <property type="entry name" value="Phosphoglucosamine_mutase"/>
</dbReference>
<dbReference type="NCBIfam" id="TIGR01455">
    <property type="entry name" value="glmM"/>
    <property type="match status" value="1"/>
</dbReference>
<dbReference type="NCBIfam" id="NF008139">
    <property type="entry name" value="PRK10887.1"/>
    <property type="match status" value="1"/>
</dbReference>
<dbReference type="PANTHER" id="PTHR42946:SF1">
    <property type="entry name" value="PHOSPHOGLUCOMUTASE (ALPHA-D-GLUCOSE-1,6-BISPHOSPHATE-DEPENDENT)"/>
    <property type="match status" value="1"/>
</dbReference>
<dbReference type="PANTHER" id="PTHR42946">
    <property type="entry name" value="PHOSPHOHEXOSE MUTASE"/>
    <property type="match status" value="1"/>
</dbReference>
<dbReference type="Pfam" id="PF02878">
    <property type="entry name" value="PGM_PMM_I"/>
    <property type="match status" value="1"/>
</dbReference>
<dbReference type="Pfam" id="PF02879">
    <property type="entry name" value="PGM_PMM_II"/>
    <property type="match status" value="1"/>
</dbReference>
<dbReference type="Pfam" id="PF02880">
    <property type="entry name" value="PGM_PMM_III"/>
    <property type="match status" value="1"/>
</dbReference>
<dbReference type="Pfam" id="PF00408">
    <property type="entry name" value="PGM_PMM_IV"/>
    <property type="match status" value="1"/>
</dbReference>
<dbReference type="PRINTS" id="PR00509">
    <property type="entry name" value="PGMPMM"/>
</dbReference>
<dbReference type="SUPFAM" id="SSF55957">
    <property type="entry name" value="Phosphoglucomutase, C-terminal domain"/>
    <property type="match status" value="1"/>
</dbReference>
<dbReference type="SUPFAM" id="SSF53738">
    <property type="entry name" value="Phosphoglucomutase, first 3 domains"/>
    <property type="match status" value="3"/>
</dbReference>
<dbReference type="PROSITE" id="PS00710">
    <property type="entry name" value="PGM_PMM"/>
    <property type="match status" value="1"/>
</dbReference>
<proteinExistence type="inferred from homology"/>
<sequence>MSNRKYFGTDGIRGRVGNAPITPDFVLKLGWAAGKVLARHGSRKIIIGKDTRISGYMLESALEAGLAAAGLSASFTGPMPTPAVAYLTRTFRAEAGIVISASHNPFYDNGIKFFSIDGTKLPDDVEEAIEAEMEKEITCVDSAELGKASRIVDAAGRYIEFCKGTFPNELSLNGLKVVVDCANGATYHIAPNVLRELGATVIAIGCEPNGVNINEEVGATDVRALQARVLAEKADLGIALDGDGDRVIMVDHEGNKVDGDQIMYIIAREGLRQGQLRGGAVGTLMSNMGLELALKQLGIPFSRAKVGDRYVLEKLQEKGWRIGAENSGHVILLDKTTTGDGIVAGLQVLAAMVRNHMSLHDLCSGMKMFPQILVNVRYTAGSGDPLENEAVKAVTADVEATLGNRGRVLLRKSGTEPLIRVMVEGEDEAQVTAFAHRIADAVKAV</sequence>
<organism>
    <name type="scientific">Salmonella choleraesuis (strain SC-B67)</name>
    <dbReference type="NCBI Taxonomy" id="321314"/>
    <lineage>
        <taxon>Bacteria</taxon>
        <taxon>Pseudomonadati</taxon>
        <taxon>Pseudomonadota</taxon>
        <taxon>Gammaproteobacteria</taxon>
        <taxon>Enterobacterales</taxon>
        <taxon>Enterobacteriaceae</taxon>
        <taxon>Salmonella</taxon>
    </lineage>
</organism>
<feature type="chain" id="PRO_0000147950" description="Phosphoglucosamine mutase">
    <location>
        <begin position="1"/>
        <end position="445"/>
    </location>
</feature>
<feature type="active site" description="Phosphoserine intermediate" evidence="1">
    <location>
        <position position="102"/>
    </location>
</feature>
<feature type="binding site" description="via phosphate group" evidence="1">
    <location>
        <position position="102"/>
    </location>
    <ligand>
        <name>Mg(2+)</name>
        <dbReference type="ChEBI" id="CHEBI:18420"/>
    </ligand>
</feature>
<feature type="binding site" evidence="1">
    <location>
        <position position="241"/>
    </location>
    <ligand>
        <name>Mg(2+)</name>
        <dbReference type="ChEBI" id="CHEBI:18420"/>
    </ligand>
</feature>
<feature type="binding site" evidence="1">
    <location>
        <position position="243"/>
    </location>
    <ligand>
        <name>Mg(2+)</name>
        <dbReference type="ChEBI" id="CHEBI:18420"/>
    </ligand>
</feature>
<feature type="binding site" evidence="1">
    <location>
        <position position="245"/>
    </location>
    <ligand>
        <name>Mg(2+)</name>
        <dbReference type="ChEBI" id="CHEBI:18420"/>
    </ligand>
</feature>
<feature type="modified residue" description="Phosphoserine" evidence="1">
    <location>
        <position position="102"/>
    </location>
</feature>
<accession>Q57JH3</accession>
<comment type="function">
    <text evidence="1">Catalyzes the conversion of glucosamine-6-phosphate to glucosamine-1-phosphate.</text>
</comment>
<comment type="catalytic activity">
    <reaction evidence="1">
        <text>alpha-D-glucosamine 1-phosphate = D-glucosamine 6-phosphate</text>
        <dbReference type="Rhea" id="RHEA:23424"/>
        <dbReference type="ChEBI" id="CHEBI:58516"/>
        <dbReference type="ChEBI" id="CHEBI:58725"/>
        <dbReference type="EC" id="5.4.2.10"/>
    </reaction>
</comment>
<comment type="cofactor">
    <cofactor evidence="1">
        <name>Mg(2+)</name>
        <dbReference type="ChEBI" id="CHEBI:18420"/>
    </cofactor>
    <text evidence="1">Binds 1 Mg(2+) ion per subunit.</text>
</comment>
<comment type="PTM">
    <text evidence="1">Activated by phosphorylation.</text>
</comment>
<comment type="similarity">
    <text evidence="1">Belongs to the phosphohexose mutase family.</text>
</comment>
<keyword id="KW-0413">Isomerase</keyword>
<keyword id="KW-0460">Magnesium</keyword>
<keyword id="KW-0479">Metal-binding</keyword>
<keyword id="KW-0597">Phosphoprotein</keyword>